<dbReference type="EMBL" id="AF469714">
    <property type="protein sequence ID" value="AAQ05225.1"/>
    <property type="molecule type" value="Genomic_DNA"/>
</dbReference>
<dbReference type="RefSeq" id="YP_003934201.1">
    <property type="nucleotide sequence ID" value="NC_014575.1"/>
</dbReference>
<dbReference type="SMR" id="Q71L79"/>
<dbReference type="GeneID" id="9845509"/>
<dbReference type="GO" id="GO:0009535">
    <property type="term" value="C:chloroplast thylakoid membrane"/>
    <property type="evidence" value="ECO:0007669"/>
    <property type="project" value="UniProtKB-SubCell"/>
</dbReference>
<dbReference type="GO" id="GO:0009539">
    <property type="term" value="C:photosystem II reaction center"/>
    <property type="evidence" value="ECO:0007669"/>
    <property type="project" value="InterPro"/>
</dbReference>
<dbReference type="GO" id="GO:0009055">
    <property type="term" value="F:electron transfer activity"/>
    <property type="evidence" value="ECO:0007669"/>
    <property type="project" value="UniProtKB-UniRule"/>
</dbReference>
<dbReference type="GO" id="GO:0020037">
    <property type="term" value="F:heme binding"/>
    <property type="evidence" value="ECO:0007669"/>
    <property type="project" value="InterPro"/>
</dbReference>
<dbReference type="GO" id="GO:0005506">
    <property type="term" value="F:iron ion binding"/>
    <property type="evidence" value="ECO:0007669"/>
    <property type="project" value="UniProtKB-UniRule"/>
</dbReference>
<dbReference type="GO" id="GO:0009767">
    <property type="term" value="P:photosynthetic electron transport chain"/>
    <property type="evidence" value="ECO:0007669"/>
    <property type="project" value="InterPro"/>
</dbReference>
<dbReference type="HAMAP" id="MF_00643">
    <property type="entry name" value="PSII_PsbF"/>
    <property type="match status" value="1"/>
</dbReference>
<dbReference type="InterPro" id="IPR006241">
    <property type="entry name" value="PSII_cyt_b559_bsu"/>
</dbReference>
<dbReference type="InterPro" id="IPR006216">
    <property type="entry name" value="PSII_cyt_b559_CS"/>
</dbReference>
<dbReference type="InterPro" id="IPR013081">
    <property type="entry name" value="PSII_cyt_b559_N"/>
</dbReference>
<dbReference type="NCBIfam" id="TIGR01333">
    <property type="entry name" value="cyt_b559_beta"/>
    <property type="match status" value="1"/>
</dbReference>
<dbReference type="Pfam" id="PF00283">
    <property type="entry name" value="Cytochrom_B559"/>
    <property type="match status" value="1"/>
</dbReference>
<dbReference type="PIRSF" id="PIRSF000037">
    <property type="entry name" value="PsbF"/>
    <property type="match status" value="1"/>
</dbReference>
<dbReference type="SUPFAM" id="SSF161045">
    <property type="entry name" value="Cytochrome b559 subunits"/>
    <property type="match status" value="1"/>
</dbReference>
<dbReference type="PROSITE" id="PS00537">
    <property type="entry name" value="CYTOCHROME_B559"/>
    <property type="match status" value="1"/>
</dbReference>
<evidence type="ECO:0000255" key="1">
    <source>
        <dbReference type="HAMAP-Rule" id="MF_00643"/>
    </source>
</evidence>
<feature type="chain" id="PRO_0000200369" description="Cytochrome b559 subunit beta">
    <location>
        <begin position="1"/>
        <end position="39"/>
    </location>
</feature>
<feature type="transmembrane region" description="Helical" evidence="1">
    <location>
        <begin position="14"/>
        <end position="30"/>
    </location>
</feature>
<feature type="binding site" description="axial binding residue" evidence="1">
    <location>
        <position position="18"/>
    </location>
    <ligand>
        <name>heme</name>
        <dbReference type="ChEBI" id="CHEBI:30413"/>
        <note>ligand shared with alpha subunit</note>
    </ligand>
    <ligandPart>
        <name>Fe</name>
        <dbReference type="ChEBI" id="CHEBI:18248"/>
    </ligandPart>
</feature>
<organism>
    <name type="scientific">Cedrus deodara</name>
    <name type="common">Deodar cedar</name>
    <name type="synonym">Pinus deodara</name>
    <dbReference type="NCBI Taxonomy" id="3322"/>
    <lineage>
        <taxon>Eukaryota</taxon>
        <taxon>Viridiplantae</taxon>
        <taxon>Streptophyta</taxon>
        <taxon>Embryophyta</taxon>
        <taxon>Tracheophyta</taxon>
        <taxon>Spermatophyta</taxon>
        <taxon>Pinopsida</taxon>
        <taxon>Pinidae</taxon>
        <taxon>Conifers I</taxon>
        <taxon>Pinales</taxon>
        <taxon>Pinaceae</taxon>
        <taxon>Cedrus</taxon>
    </lineage>
</organism>
<sequence>MTTDRTYPIFTVRWLAVHGLAVPTVFFLGSISAMQFIQR</sequence>
<name>PSBF_CEDDE</name>
<protein>
    <recommendedName>
        <fullName evidence="1">Cytochrome b559 subunit beta</fullName>
    </recommendedName>
    <alternativeName>
        <fullName evidence="1">PSII reaction center subunit VI</fullName>
    </alternativeName>
</protein>
<gene>
    <name evidence="1" type="primary">psbF</name>
</gene>
<accession>Q71L79</accession>
<comment type="function">
    <text evidence="1">This b-type cytochrome is tightly associated with the reaction center of photosystem II (PSII). PSII is a light-driven water:plastoquinone oxidoreductase that uses light energy to abstract electrons from H(2)O, generating O(2) and a proton gradient subsequently used for ATP formation. It consists of a core antenna complex that captures photons, and an electron transfer chain that converts photonic excitation into a charge separation.</text>
</comment>
<comment type="cofactor">
    <cofactor evidence="1">
        <name>heme b</name>
        <dbReference type="ChEBI" id="CHEBI:60344"/>
    </cofactor>
    <text evidence="1">With its partner (PsbE) binds heme. PSII binds additional chlorophylls, carotenoids and specific lipids.</text>
</comment>
<comment type="subunit">
    <text evidence="1">Heterodimer of an alpha subunit and a beta subunit. PSII is composed of 1 copy each of membrane proteins PsbA, PsbB, PsbC, PsbD, PsbE, PsbF, PsbH, PsbI, PsbJ, PsbK, PsbL, PsbM, PsbT, PsbX, PsbY, PsbZ, Psb30/Ycf12, at least 3 peripheral proteins of the oxygen-evolving complex and a large number of cofactors. It forms dimeric complexes.</text>
</comment>
<comment type="subcellular location">
    <subcellularLocation>
        <location evidence="1">Plastid</location>
        <location evidence="1">Chloroplast thylakoid membrane</location>
        <topology evidence="1">Single-pass membrane protein</topology>
    </subcellularLocation>
</comment>
<comment type="similarity">
    <text evidence="1">Belongs to the PsbE/PsbF family.</text>
</comment>
<reference key="1">
    <citation type="journal article" date="2003" name="Mol. Phylogenet. Evol.">
        <title>Inference of higher-order relationships in the cycads from a large chloroplast data set.</title>
        <authorList>
            <person name="Rai H.S."/>
            <person name="O'Brien H.E."/>
            <person name="Reeves P.A."/>
            <person name="Olmstead R.G."/>
            <person name="Graham S.W."/>
        </authorList>
    </citation>
    <scope>NUCLEOTIDE SEQUENCE [GENOMIC DNA]</scope>
</reference>
<keyword id="KW-0150">Chloroplast</keyword>
<keyword id="KW-0249">Electron transport</keyword>
<keyword id="KW-0349">Heme</keyword>
<keyword id="KW-0408">Iron</keyword>
<keyword id="KW-0472">Membrane</keyword>
<keyword id="KW-0479">Metal-binding</keyword>
<keyword id="KW-0602">Photosynthesis</keyword>
<keyword id="KW-0604">Photosystem II</keyword>
<keyword id="KW-0934">Plastid</keyword>
<keyword id="KW-0793">Thylakoid</keyword>
<keyword id="KW-0812">Transmembrane</keyword>
<keyword id="KW-1133">Transmembrane helix</keyword>
<keyword id="KW-0813">Transport</keyword>
<proteinExistence type="inferred from homology"/>
<geneLocation type="chloroplast"/>